<dbReference type="EMBL" id="AM180252">
    <property type="protein sequence ID" value="CAJ54124.1"/>
    <property type="molecule type" value="Genomic_DNA"/>
</dbReference>
<dbReference type="RefSeq" id="WP_011526151.1">
    <property type="nucleotide sequence ID" value="NC_008011.1"/>
</dbReference>
<dbReference type="SMR" id="Q1MSA1"/>
<dbReference type="STRING" id="363253.LI0068"/>
<dbReference type="KEGG" id="lip:LI0068"/>
<dbReference type="eggNOG" id="COG0218">
    <property type="taxonomic scope" value="Bacteria"/>
</dbReference>
<dbReference type="HOGENOM" id="CLU_033732_3_0_7"/>
<dbReference type="OrthoDB" id="9804921at2"/>
<dbReference type="Proteomes" id="UP000002430">
    <property type="component" value="Chromosome"/>
</dbReference>
<dbReference type="GO" id="GO:0005829">
    <property type="term" value="C:cytosol"/>
    <property type="evidence" value="ECO:0007669"/>
    <property type="project" value="TreeGrafter"/>
</dbReference>
<dbReference type="GO" id="GO:0005525">
    <property type="term" value="F:GTP binding"/>
    <property type="evidence" value="ECO:0007669"/>
    <property type="project" value="UniProtKB-UniRule"/>
</dbReference>
<dbReference type="GO" id="GO:0046872">
    <property type="term" value="F:metal ion binding"/>
    <property type="evidence" value="ECO:0007669"/>
    <property type="project" value="UniProtKB-KW"/>
</dbReference>
<dbReference type="GO" id="GO:0000917">
    <property type="term" value="P:division septum assembly"/>
    <property type="evidence" value="ECO:0007669"/>
    <property type="project" value="UniProtKB-KW"/>
</dbReference>
<dbReference type="CDD" id="cd01876">
    <property type="entry name" value="YihA_EngB"/>
    <property type="match status" value="1"/>
</dbReference>
<dbReference type="Gene3D" id="3.40.50.300">
    <property type="entry name" value="P-loop containing nucleotide triphosphate hydrolases"/>
    <property type="match status" value="1"/>
</dbReference>
<dbReference type="HAMAP" id="MF_00321">
    <property type="entry name" value="GTPase_EngB"/>
    <property type="match status" value="1"/>
</dbReference>
<dbReference type="InterPro" id="IPR030393">
    <property type="entry name" value="G_ENGB_dom"/>
</dbReference>
<dbReference type="InterPro" id="IPR006073">
    <property type="entry name" value="GTP-bd"/>
</dbReference>
<dbReference type="InterPro" id="IPR019987">
    <property type="entry name" value="GTP-bd_ribosome_bio_YsxC"/>
</dbReference>
<dbReference type="InterPro" id="IPR027417">
    <property type="entry name" value="P-loop_NTPase"/>
</dbReference>
<dbReference type="InterPro" id="IPR005225">
    <property type="entry name" value="Small_GTP-bd"/>
</dbReference>
<dbReference type="NCBIfam" id="TIGR03598">
    <property type="entry name" value="GTPase_YsxC"/>
    <property type="match status" value="1"/>
</dbReference>
<dbReference type="NCBIfam" id="TIGR00231">
    <property type="entry name" value="small_GTP"/>
    <property type="match status" value="1"/>
</dbReference>
<dbReference type="PANTHER" id="PTHR11649:SF13">
    <property type="entry name" value="ENGB-TYPE G DOMAIN-CONTAINING PROTEIN"/>
    <property type="match status" value="1"/>
</dbReference>
<dbReference type="PANTHER" id="PTHR11649">
    <property type="entry name" value="MSS1/TRME-RELATED GTP-BINDING PROTEIN"/>
    <property type="match status" value="1"/>
</dbReference>
<dbReference type="Pfam" id="PF01926">
    <property type="entry name" value="MMR_HSR1"/>
    <property type="match status" value="1"/>
</dbReference>
<dbReference type="SUPFAM" id="SSF52540">
    <property type="entry name" value="P-loop containing nucleoside triphosphate hydrolases"/>
    <property type="match status" value="1"/>
</dbReference>
<dbReference type="PROSITE" id="PS51706">
    <property type="entry name" value="G_ENGB"/>
    <property type="match status" value="1"/>
</dbReference>
<gene>
    <name evidence="1" type="primary">engB</name>
    <name type="ordered locus">LI0068</name>
</gene>
<reference key="1">
    <citation type="submission" date="2005-11" db="EMBL/GenBank/DDBJ databases">
        <title>The complete genome sequence of Lawsonia intracellularis: the causative agent of proliferative enteropathy.</title>
        <authorList>
            <person name="Kaur K."/>
            <person name="Zhang Q."/>
            <person name="Beckler D."/>
            <person name="Munir S."/>
            <person name="Li L."/>
            <person name="Kinsley K."/>
            <person name="Herron L."/>
            <person name="Peterson A."/>
            <person name="May B."/>
            <person name="Singh S."/>
            <person name="Gebhart C."/>
            <person name="Kapur V."/>
        </authorList>
    </citation>
    <scope>NUCLEOTIDE SEQUENCE [LARGE SCALE GENOMIC DNA]</scope>
    <source>
        <strain>PHE/MN1-00</strain>
    </source>
</reference>
<sequence>MMTQYKLQLEATNFTKQQLQQQLDILEQNNILQIALAGRSNVGKSSLINALAGRKQLAKTSGTPGKTRSINFYAVYPNTFMLVDLPGYGYAQCSKIERQHWAMLIEYYLKNCSKLKAFVLLIDCRIPPQKLDYELAEFATSYCIPLIPVLTKIDKCKLVEQNKRQKEWRALLNNTQPLLVSSKNMKGVQQLWERIQYTIDSY</sequence>
<evidence type="ECO:0000255" key="1">
    <source>
        <dbReference type="HAMAP-Rule" id="MF_00321"/>
    </source>
</evidence>
<comment type="function">
    <text evidence="1">Necessary for normal cell division and for the maintenance of normal septation.</text>
</comment>
<comment type="cofactor">
    <cofactor evidence="1">
        <name>Mg(2+)</name>
        <dbReference type="ChEBI" id="CHEBI:18420"/>
    </cofactor>
</comment>
<comment type="similarity">
    <text evidence="1">Belongs to the TRAFAC class TrmE-Era-EngA-EngB-Septin-like GTPase superfamily. EngB GTPase family.</text>
</comment>
<accession>Q1MSA1</accession>
<organism>
    <name type="scientific">Lawsonia intracellularis (strain PHE/MN1-00)</name>
    <dbReference type="NCBI Taxonomy" id="363253"/>
    <lineage>
        <taxon>Bacteria</taxon>
        <taxon>Pseudomonadati</taxon>
        <taxon>Thermodesulfobacteriota</taxon>
        <taxon>Desulfovibrionia</taxon>
        <taxon>Desulfovibrionales</taxon>
        <taxon>Desulfovibrionaceae</taxon>
        <taxon>Lawsonia</taxon>
    </lineage>
</organism>
<feature type="chain" id="PRO_0000266883" description="Probable GTP-binding protein EngB">
    <location>
        <begin position="1"/>
        <end position="202"/>
    </location>
</feature>
<feature type="domain" description="EngB-type G" evidence="1">
    <location>
        <begin position="30"/>
        <end position="201"/>
    </location>
</feature>
<feature type="binding site" evidence="1">
    <location>
        <begin position="38"/>
        <end position="45"/>
    </location>
    <ligand>
        <name>GTP</name>
        <dbReference type="ChEBI" id="CHEBI:37565"/>
    </ligand>
</feature>
<feature type="binding site" evidence="1">
    <location>
        <position position="45"/>
    </location>
    <ligand>
        <name>Mg(2+)</name>
        <dbReference type="ChEBI" id="CHEBI:18420"/>
    </ligand>
</feature>
<feature type="binding site" evidence="1">
    <location>
        <begin position="65"/>
        <end position="69"/>
    </location>
    <ligand>
        <name>GTP</name>
        <dbReference type="ChEBI" id="CHEBI:37565"/>
    </ligand>
</feature>
<feature type="binding site" evidence="1">
    <location>
        <position position="67"/>
    </location>
    <ligand>
        <name>Mg(2+)</name>
        <dbReference type="ChEBI" id="CHEBI:18420"/>
    </ligand>
</feature>
<feature type="binding site" evidence="1">
    <location>
        <begin position="84"/>
        <end position="87"/>
    </location>
    <ligand>
        <name>GTP</name>
        <dbReference type="ChEBI" id="CHEBI:37565"/>
    </ligand>
</feature>
<feature type="binding site" evidence="1">
    <location>
        <begin position="151"/>
        <end position="154"/>
    </location>
    <ligand>
        <name>GTP</name>
        <dbReference type="ChEBI" id="CHEBI:37565"/>
    </ligand>
</feature>
<feature type="binding site" evidence="1">
    <location>
        <begin position="180"/>
        <end position="182"/>
    </location>
    <ligand>
        <name>GTP</name>
        <dbReference type="ChEBI" id="CHEBI:37565"/>
    </ligand>
</feature>
<proteinExistence type="inferred from homology"/>
<protein>
    <recommendedName>
        <fullName evidence="1">Probable GTP-binding protein EngB</fullName>
    </recommendedName>
</protein>
<keyword id="KW-0131">Cell cycle</keyword>
<keyword id="KW-0132">Cell division</keyword>
<keyword id="KW-0342">GTP-binding</keyword>
<keyword id="KW-0460">Magnesium</keyword>
<keyword id="KW-0479">Metal-binding</keyword>
<keyword id="KW-0547">Nucleotide-binding</keyword>
<keyword id="KW-1185">Reference proteome</keyword>
<keyword id="KW-0717">Septation</keyword>
<name>ENGB_LAWIP</name>